<reference key="1">
    <citation type="journal article" date="2009" name="Toxicon">
        <title>C-type lectin protein isoforms of Macrovipera lebetina: cDNA cloning and genetic diversity.</title>
        <authorList>
            <person name="Jebali J."/>
            <person name="Bazaa A."/>
            <person name="Sarray S."/>
            <person name="Benhaj K."/>
            <person name="Karboul A."/>
            <person name="El Ayeb M."/>
            <person name="Marrakchi N."/>
            <person name="Gargouri A."/>
        </authorList>
    </citation>
    <scope>NUCLEOTIDE SEQUENCE [MRNA]</scope>
</reference>
<dbReference type="EMBL" id="EU085470">
    <property type="protein sequence ID" value="ABW82680.1"/>
    <property type="molecule type" value="mRNA"/>
</dbReference>
<dbReference type="SMR" id="B4XT08"/>
<dbReference type="GO" id="GO:0005576">
    <property type="term" value="C:extracellular region"/>
    <property type="evidence" value="ECO:0007669"/>
    <property type="project" value="UniProtKB-SubCell"/>
</dbReference>
<dbReference type="GO" id="GO:0090729">
    <property type="term" value="F:toxin activity"/>
    <property type="evidence" value="ECO:0007669"/>
    <property type="project" value="UniProtKB-KW"/>
</dbReference>
<dbReference type="FunFam" id="3.10.100.10:FF:000087">
    <property type="entry name" value="Snaclec rhodocetin subunit delta"/>
    <property type="match status" value="1"/>
</dbReference>
<dbReference type="Gene3D" id="3.10.100.10">
    <property type="entry name" value="Mannose-Binding Protein A, subunit A"/>
    <property type="match status" value="1"/>
</dbReference>
<dbReference type="InterPro" id="IPR001304">
    <property type="entry name" value="C-type_lectin-like"/>
</dbReference>
<dbReference type="InterPro" id="IPR016186">
    <property type="entry name" value="C-type_lectin-like/link_sf"/>
</dbReference>
<dbReference type="InterPro" id="IPR050111">
    <property type="entry name" value="C-type_lectin/snaclec_domain"/>
</dbReference>
<dbReference type="InterPro" id="IPR018378">
    <property type="entry name" value="C-type_lectin_CS"/>
</dbReference>
<dbReference type="InterPro" id="IPR016187">
    <property type="entry name" value="CTDL_fold"/>
</dbReference>
<dbReference type="PANTHER" id="PTHR22803">
    <property type="entry name" value="MANNOSE, PHOSPHOLIPASE, LECTIN RECEPTOR RELATED"/>
    <property type="match status" value="1"/>
</dbReference>
<dbReference type="Pfam" id="PF00059">
    <property type="entry name" value="Lectin_C"/>
    <property type="match status" value="1"/>
</dbReference>
<dbReference type="PRINTS" id="PR01504">
    <property type="entry name" value="PNCREATITSAP"/>
</dbReference>
<dbReference type="SMART" id="SM00034">
    <property type="entry name" value="CLECT"/>
    <property type="match status" value="1"/>
</dbReference>
<dbReference type="SUPFAM" id="SSF56436">
    <property type="entry name" value="C-type lectin-like"/>
    <property type="match status" value="1"/>
</dbReference>
<dbReference type="PROSITE" id="PS00615">
    <property type="entry name" value="C_TYPE_LECTIN_1"/>
    <property type="match status" value="1"/>
</dbReference>
<dbReference type="PROSITE" id="PS50041">
    <property type="entry name" value="C_TYPE_LECTIN_2"/>
    <property type="match status" value="1"/>
</dbReference>
<feature type="signal peptide" evidence="2">
    <location>
        <begin position="1"/>
        <end position="24"/>
    </location>
</feature>
<feature type="chain" id="PRO_0000356340" description="Snaclec B9">
    <location>
        <begin position="25"/>
        <end position="148"/>
    </location>
</feature>
<feature type="domain" description="C-type lectin" evidence="3">
    <location>
        <begin position="34"/>
        <end position="145"/>
    </location>
</feature>
<feature type="glycosylation site" description="N-linked (GlcNAc...) asparagine" evidence="2">
    <location>
        <position position="57"/>
    </location>
</feature>
<feature type="glycosylation site" description="N-linked (GlcNAc...) asparagine" evidence="2">
    <location>
        <position position="60"/>
    </location>
</feature>
<feature type="disulfide bond" evidence="3">
    <location>
        <begin position="27"/>
        <end position="38"/>
    </location>
</feature>
<feature type="disulfide bond" evidence="3">
    <location>
        <begin position="55"/>
        <end position="144"/>
    </location>
</feature>
<feature type="disulfide bond" description="Interchain" evidence="3">
    <location>
        <position position="100"/>
    </location>
</feature>
<feature type="disulfide bond" evidence="3">
    <location>
        <begin position="121"/>
        <end position="136"/>
    </location>
</feature>
<name>SLB9_MACLB</name>
<accession>B4XT08</accession>
<protein>
    <recommendedName>
        <fullName>Snaclec B9</fullName>
    </recommendedName>
    <alternativeName>
        <fullName>C-type lectin B9</fullName>
    </alternativeName>
</protein>
<comment type="function">
    <text evidence="1">Interferes with one step of hemostasis (modulation of platelet aggregation, or coagulation cascade, for example).</text>
</comment>
<comment type="subunit">
    <text evidence="1">Heterodimer; disulfide-linked.</text>
</comment>
<comment type="subcellular location">
    <subcellularLocation>
        <location evidence="1">Secreted</location>
    </subcellularLocation>
</comment>
<comment type="tissue specificity">
    <text>Expressed by the venom gland.</text>
</comment>
<comment type="miscellaneous">
    <text>Shows greater sequence similarity to the beta than alpha subunits compared to other heterodimer snaclecs.</text>
</comment>
<comment type="similarity">
    <text evidence="4">Belongs to the snaclec family.</text>
</comment>
<sequence length="148" mass="16599">MGRFIFVSFGLLVVFLSLSGTGAALNCASGWSGYDQHCYKVFDKPKSWADAEKFCKNSTNGSHLASIHSSEEEAFVVKLVSQTLESQILWMGLSKVWNQCDWGWSNGAKLKYKAWAEESYCVYFSSTKKGWRSRACRLLGHFVCKSPA</sequence>
<keyword id="KW-1015">Disulfide bond</keyword>
<keyword id="KW-0325">Glycoprotein</keyword>
<keyword id="KW-1199">Hemostasis impairing toxin</keyword>
<keyword id="KW-0964">Secreted</keyword>
<keyword id="KW-0732">Signal</keyword>
<keyword id="KW-0800">Toxin</keyword>
<proteinExistence type="evidence at transcript level"/>
<organism>
    <name type="scientific">Macrovipera lebetinus</name>
    <name type="common">Levantine viper</name>
    <name type="synonym">Vipera lebetina</name>
    <dbReference type="NCBI Taxonomy" id="3148341"/>
    <lineage>
        <taxon>Eukaryota</taxon>
        <taxon>Metazoa</taxon>
        <taxon>Chordata</taxon>
        <taxon>Craniata</taxon>
        <taxon>Vertebrata</taxon>
        <taxon>Euteleostomi</taxon>
        <taxon>Lepidosauria</taxon>
        <taxon>Squamata</taxon>
        <taxon>Bifurcata</taxon>
        <taxon>Unidentata</taxon>
        <taxon>Episquamata</taxon>
        <taxon>Toxicofera</taxon>
        <taxon>Serpentes</taxon>
        <taxon>Colubroidea</taxon>
        <taxon>Viperidae</taxon>
        <taxon>Viperinae</taxon>
        <taxon>Macrovipera</taxon>
    </lineage>
</organism>
<evidence type="ECO:0000250" key="1"/>
<evidence type="ECO:0000255" key="2"/>
<evidence type="ECO:0000255" key="3">
    <source>
        <dbReference type="PROSITE-ProRule" id="PRU00040"/>
    </source>
</evidence>
<evidence type="ECO:0000305" key="4"/>